<gene>
    <name evidence="1" type="primary">secY</name>
    <name type="ordered locus">VC_2576</name>
</gene>
<keyword id="KW-0997">Cell inner membrane</keyword>
<keyword id="KW-1003">Cell membrane</keyword>
<keyword id="KW-0472">Membrane</keyword>
<keyword id="KW-0653">Protein transport</keyword>
<keyword id="KW-1185">Reference proteome</keyword>
<keyword id="KW-0811">Translocation</keyword>
<keyword id="KW-0812">Transmembrane</keyword>
<keyword id="KW-1133">Transmembrane helix</keyword>
<keyword id="KW-0813">Transport</keyword>
<organism>
    <name type="scientific">Vibrio cholerae serotype O1 (strain ATCC 39315 / El Tor Inaba N16961)</name>
    <dbReference type="NCBI Taxonomy" id="243277"/>
    <lineage>
        <taxon>Bacteria</taxon>
        <taxon>Pseudomonadati</taxon>
        <taxon>Pseudomonadota</taxon>
        <taxon>Gammaproteobacteria</taxon>
        <taxon>Vibrionales</taxon>
        <taxon>Vibrionaceae</taxon>
        <taxon>Vibrio</taxon>
    </lineage>
</organism>
<reference key="1">
    <citation type="journal article" date="1997" name="Gene">
        <title>The secY gene of V. cholerae: identification, cloning and characterization.</title>
        <authorList>
            <person name="Bhattacharyya D."/>
            <person name="Das J."/>
        </authorList>
    </citation>
    <scope>NUCLEOTIDE SEQUENCE [GENOMIC DNA]</scope>
    <source>
        <strain>ATCC 25870 / Classical Inaba 569B / Serotype O1</strain>
    </source>
</reference>
<reference key="2">
    <citation type="journal article" date="2000" name="Nature">
        <title>DNA sequence of both chromosomes of the cholera pathogen Vibrio cholerae.</title>
        <authorList>
            <person name="Heidelberg J.F."/>
            <person name="Eisen J.A."/>
            <person name="Nelson W.C."/>
            <person name="Clayton R.A."/>
            <person name="Gwinn M.L."/>
            <person name="Dodson R.J."/>
            <person name="Haft D.H."/>
            <person name="Hickey E.K."/>
            <person name="Peterson J.D."/>
            <person name="Umayam L.A."/>
            <person name="Gill S.R."/>
            <person name="Nelson K.E."/>
            <person name="Read T.D."/>
            <person name="Tettelin H."/>
            <person name="Richardson D.L."/>
            <person name="Ermolaeva M.D."/>
            <person name="Vamathevan J.J."/>
            <person name="Bass S."/>
            <person name="Qin H."/>
            <person name="Dragoi I."/>
            <person name="Sellers P."/>
            <person name="McDonald L.A."/>
            <person name="Utterback T.R."/>
            <person name="Fleischmann R.D."/>
            <person name="Nierman W.C."/>
            <person name="White O."/>
            <person name="Salzberg S.L."/>
            <person name="Smith H.O."/>
            <person name="Colwell R.R."/>
            <person name="Mekalanos J.J."/>
            <person name="Venter J.C."/>
            <person name="Fraser C.M."/>
        </authorList>
    </citation>
    <scope>NUCLEOTIDE SEQUENCE [LARGE SCALE GENOMIC DNA]</scope>
    <source>
        <strain>ATCC 39315 / El Tor Inaba N16961</strain>
    </source>
</reference>
<evidence type="ECO:0000255" key="1">
    <source>
        <dbReference type="HAMAP-Rule" id="MF_01465"/>
    </source>
</evidence>
<evidence type="ECO:0000305" key="2"/>
<comment type="function">
    <text evidence="1">The central subunit of the protein translocation channel SecYEG. Consists of two halves formed by TMs 1-5 and 6-10. These two domains form a lateral gate at the front which open onto the bilayer between TMs 2 and 7, and are clamped together by SecE at the back. The channel is closed by both a pore ring composed of hydrophobic SecY resides and a short helix (helix 2A) on the extracellular side of the membrane which forms a plug. The plug probably moves laterally to allow the channel to open. The ring and the pore may move independently.</text>
</comment>
<comment type="subunit">
    <text evidence="1">Component of the Sec protein translocase complex. Heterotrimer consisting of SecY, SecE and SecG subunits. The heterotrimers can form oligomers, although 1 heterotrimer is thought to be able to translocate proteins. Interacts with the ribosome. Interacts with SecDF, and other proteins may be involved. Interacts with SecA.</text>
</comment>
<comment type="subcellular location">
    <subcellularLocation>
        <location evidence="1">Cell inner membrane</location>
        <topology evidence="1">Multi-pass membrane protein</topology>
    </subcellularLocation>
</comment>
<comment type="similarity">
    <text evidence="1">Belongs to the SecY/SEC61-alpha family.</text>
</comment>
<name>SECY_VIBCH</name>
<accession>P78283</accession>
<accession>Q9KP04</accession>
<protein>
    <recommendedName>
        <fullName evidence="1">Protein translocase subunit SecY</fullName>
    </recommendedName>
</protein>
<dbReference type="EMBL" id="Y08367">
    <property type="protein sequence ID" value="CAA69654.1"/>
    <property type="molecule type" value="Genomic_DNA"/>
</dbReference>
<dbReference type="EMBL" id="Y07817">
    <property type="protein sequence ID" value="CAA69151.1"/>
    <property type="molecule type" value="Genomic_DNA"/>
</dbReference>
<dbReference type="EMBL" id="AE003852">
    <property type="protein sequence ID" value="AAF95717.1"/>
    <property type="molecule type" value="Genomic_DNA"/>
</dbReference>
<dbReference type="PIR" id="B82057">
    <property type="entry name" value="B82057"/>
</dbReference>
<dbReference type="RefSeq" id="NP_232204.1">
    <property type="nucleotide sequence ID" value="NC_002505.1"/>
</dbReference>
<dbReference type="RefSeq" id="WP_000101599.1">
    <property type="nucleotide sequence ID" value="NZ_LT906614.1"/>
</dbReference>
<dbReference type="SMR" id="P78283"/>
<dbReference type="STRING" id="243277.VC_2576"/>
<dbReference type="DNASU" id="2615593"/>
<dbReference type="EnsemblBacteria" id="AAF95717">
    <property type="protein sequence ID" value="AAF95717"/>
    <property type="gene ID" value="VC_2576"/>
</dbReference>
<dbReference type="GeneID" id="69718820"/>
<dbReference type="KEGG" id="vch:VC_2576"/>
<dbReference type="PATRIC" id="fig|243277.26.peg.2455"/>
<dbReference type="eggNOG" id="COG0201">
    <property type="taxonomic scope" value="Bacteria"/>
</dbReference>
<dbReference type="HOGENOM" id="CLU_030313_0_2_6"/>
<dbReference type="Proteomes" id="UP000000584">
    <property type="component" value="Chromosome 1"/>
</dbReference>
<dbReference type="GO" id="GO:0031522">
    <property type="term" value="C:cell envelope Sec protein transport complex"/>
    <property type="evidence" value="ECO:0000318"/>
    <property type="project" value="GO_Central"/>
</dbReference>
<dbReference type="GO" id="GO:0005886">
    <property type="term" value="C:plasma membrane"/>
    <property type="evidence" value="ECO:0000318"/>
    <property type="project" value="GO_Central"/>
</dbReference>
<dbReference type="GO" id="GO:0008320">
    <property type="term" value="F:protein transmembrane transporter activity"/>
    <property type="evidence" value="ECO:0000318"/>
    <property type="project" value="GO_Central"/>
</dbReference>
<dbReference type="GO" id="GO:0005048">
    <property type="term" value="F:signal sequence binding"/>
    <property type="evidence" value="ECO:0000318"/>
    <property type="project" value="GO_Central"/>
</dbReference>
<dbReference type="GO" id="GO:0043952">
    <property type="term" value="P:protein transport by the Sec complex"/>
    <property type="evidence" value="ECO:0007669"/>
    <property type="project" value="UniProtKB-UniRule"/>
</dbReference>
<dbReference type="GO" id="GO:0006616">
    <property type="term" value="P:SRP-dependent cotranslational protein targeting to membrane, translocation"/>
    <property type="evidence" value="ECO:0000318"/>
    <property type="project" value="GO_Central"/>
</dbReference>
<dbReference type="FunFam" id="1.10.3370.10:FF:000001">
    <property type="entry name" value="Preprotein translocase subunit SecY"/>
    <property type="match status" value="1"/>
</dbReference>
<dbReference type="Gene3D" id="1.10.3370.10">
    <property type="entry name" value="SecY subunit domain"/>
    <property type="match status" value="1"/>
</dbReference>
<dbReference type="HAMAP" id="MF_01465">
    <property type="entry name" value="SecY"/>
    <property type="match status" value="1"/>
</dbReference>
<dbReference type="InterPro" id="IPR026593">
    <property type="entry name" value="SecY"/>
</dbReference>
<dbReference type="InterPro" id="IPR002208">
    <property type="entry name" value="SecY/SEC61-alpha"/>
</dbReference>
<dbReference type="InterPro" id="IPR030659">
    <property type="entry name" value="SecY_CS"/>
</dbReference>
<dbReference type="InterPro" id="IPR023201">
    <property type="entry name" value="SecY_dom_sf"/>
</dbReference>
<dbReference type="NCBIfam" id="TIGR00967">
    <property type="entry name" value="3a0501s007"/>
    <property type="match status" value="1"/>
</dbReference>
<dbReference type="PANTHER" id="PTHR10906">
    <property type="entry name" value="SECY/SEC61-ALPHA FAMILY MEMBER"/>
    <property type="match status" value="1"/>
</dbReference>
<dbReference type="Pfam" id="PF00344">
    <property type="entry name" value="SecY"/>
    <property type="match status" value="1"/>
</dbReference>
<dbReference type="PIRSF" id="PIRSF004557">
    <property type="entry name" value="SecY"/>
    <property type="match status" value="1"/>
</dbReference>
<dbReference type="PRINTS" id="PR00303">
    <property type="entry name" value="SECYTRNLCASE"/>
</dbReference>
<dbReference type="SUPFAM" id="SSF103491">
    <property type="entry name" value="Preprotein translocase SecY subunit"/>
    <property type="match status" value="1"/>
</dbReference>
<dbReference type="PROSITE" id="PS00755">
    <property type="entry name" value="SECY_1"/>
    <property type="match status" value="1"/>
</dbReference>
<dbReference type="PROSITE" id="PS00756">
    <property type="entry name" value="SECY_2"/>
    <property type="match status" value="1"/>
</dbReference>
<sequence>MARKPGQDFRSAQSGLSELKSRLFFVIGALLVFRAGSFVPIPGIDAAVLAELFEQQKGTIVEMFNMFSGGALERASILALGIMPYISASIVVQLLTVVHPALAELKKEGEAGRRKISQYTRYGTLVLATFQAIGIATGLPNMVNNLVVIDQTMFTLIATVSLVTGTMFLMWLGEQITERGIGNGISILIFAGIVAGLPKAIGQTIEQARQGELHVLLLLLIAVLAFAVIYFVVFMERGQRRIVVNYAKRQQGRKVFAAQSTHLPLKINMAGVIPAIFASSIILFPGTLAQWFGQNGESSTFGWLTDVSLALSPGQPLYVMLYAAAIIFFCFFYTALVFNPRETADNLKKSGAFVPGIRPGEQTAKYIDKVMTRLTLAGALYITFICLIPEFMMVAWNVRFYFGGTSLLIVVVVIMDFMAQVQTHLMSHQYESVLKKANLKGYGR</sequence>
<proteinExistence type="inferred from homology"/>
<feature type="chain" id="PRO_0000131758" description="Protein translocase subunit SecY">
    <location>
        <begin position="1"/>
        <end position="444"/>
    </location>
</feature>
<feature type="transmembrane region" description="Helical" evidence="1">
    <location>
        <begin position="24"/>
        <end position="44"/>
    </location>
</feature>
<feature type="transmembrane region" description="Helical" evidence="1">
    <location>
        <begin position="77"/>
        <end position="97"/>
    </location>
</feature>
<feature type="transmembrane region" description="Helical" evidence="1">
    <location>
        <begin position="123"/>
        <end position="143"/>
    </location>
</feature>
<feature type="transmembrane region" description="Helical" evidence="1">
    <location>
        <begin position="153"/>
        <end position="173"/>
    </location>
</feature>
<feature type="transmembrane region" description="Helical" evidence="1">
    <location>
        <begin position="181"/>
        <end position="201"/>
    </location>
</feature>
<feature type="transmembrane region" description="Helical" evidence="1">
    <location>
        <begin position="215"/>
        <end position="235"/>
    </location>
</feature>
<feature type="transmembrane region" description="Helical" evidence="1">
    <location>
        <begin position="269"/>
        <end position="289"/>
    </location>
</feature>
<feature type="transmembrane region" description="Helical" evidence="1">
    <location>
        <begin position="318"/>
        <end position="338"/>
    </location>
</feature>
<feature type="transmembrane region" description="Helical" evidence="1">
    <location>
        <begin position="376"/>
        <end position="396"/>
    </location>
</feature>
<feature type="transmembrane region" description="Helical" evidence="1">
    <location>
        <begin position="400"/>
        <end position="420"/>
    </location>
</feature>
<feature type="sequence conflict" description="In Ref. 1; CAA69654/CAA69151." evidence="2" ref="1">
    <original>S</original>
    <variation>R</variation>
    <location>
        <position position="17"/>
    </location>
</feature>
<feature type="sequence conflict" description="In Ref. 1; CAA69654/CAA69151." evidence="2" ref="1">
    <original>I</original>
    <variation>M</variation>
    <location>
        <position position="82"/>
    </location>
</feature>
<feature type="sequence conflict" description="In Ref. 1; CAA69654/CAA69151." evidence="2" ref="1">
    <location>
        <position position="103"/>
    </location>
</feature>
<feature type="sequence conflict" description="In Ref. 1; CAA69654/CAA69151." evidence="2" ref="1">
    <original>P</original>
    <variation>R</variation>
    <location>
        <position position="140"/>
    </location>
</feature>
<feature type="sequence conflict" description="In Ref. 1; CAA69654/CAA69151." evidence="2" ref="1">
    <location>
        <begin position="208"/>
        <end position="210"/>
    </location>
</feature>
<feature type="sequence conflict" description="In Ref. 1; CAA69654/CAA69151." evidence="2" ref="1">
    <original>V</original>
    <variation>L</variation>
    <location>
        <position position="233"/>
    </location>
</feature>
<feature type="sequence conflict" description="In Ref. 1; CAA69654/CAA69151." evidence="2" ref="1">
    <original>A</original>
    <variation>C</variation>
    <location>
        <position position="278"/>
    </location>
</feature>
<feature type="sequence conflict" description="In Ref. 1; CAA69654/CAA69151." evidence="2" ref="1">
    <original>ESSTF</original>
    <variation>AHS</variation>
    <location>
        <begin position="297"/>
        <end position="301"/>
    </location>
</feature>
<feature type="sequence conflict" description="In Ref. 1; CAA69654/CAA69151." evidence="2" ref="1">
    <original>T</original>
    <variation>S</variation>
    <location>
        <position position="343"/>
    </location>
</feature>
<feature type="sequence conflict" description="In Ref. 1; CAA69654/CAA69151." evidence="2" ref="1">
    <original>I</original>
    <variation>N</variation>
    <location>
        <position position="388"/>
    </location>
</feature>
<feature type="sequence conflict" description="In Ref. 1; CAA69654/CAA69151." evidence="2" ref="1">
    <original>R</original>
    <variation>P</variation>
    <location>
        <position position="399"/>
    </location>
</feature>
<feature type="sequence conflict" description="In Ref. 1; CAA69654/CAA69151." evidence="2" ref="1">
    <original>F</original>
    <variation>L</variation>
    <location>
        <position position="417"/>
    </location>
</feature>
<feature type="sequence conflict" description="In Ref. 1; CAA69654/CAA69151." evidence="2" ref="1">
    <original>VQTH</original>
    <variation>GTTL</variation>
    <location>
        <begin position="421"/>
        <end position="424"/>
    </location>
</feature>
<feature type="sequence conflict" description="In Ref. 1; CAA69654/CAA69151." evidence="2" ref="1">
    <original>A</original>
    <variation>D</variation>
    <location>
        <position position="437"/>
    </location>
</feature>
<feature type="sequence conflict" description="In Ref. 1; CAA69654/CAA69151." evidence="2" ref="1">
    <original>Y</original>
    <variation>L</variation>
    <location>
        <position position="442"/>
    </location>
</feature>